<comment type="function">
    <text evidence="1">Catalyzes the interconversion of methylthioribose-1-phosphate (MTR-1-P) into methylthioribulose-1-phosphate (MTRu-1-P).</text>
</comment>
<comment type="catalytic activity">
    <reaction evidence="1">
        <text>5-(methylsulfanyl)-alpha-D-ribose 1-phosphate = 5-(methylsulfanyl)-D-ribulose 1-phosphate</text>
        <dbReference type="Rhea" id="RHEA:19989"/>
        <dbReference type="ChEBI" id="CHEBI:58533"/>
        <dbReference type="ChEBI" id="CHEBI:58548"/>
        <dbReference type="EC" id="5.3.1.23"/>
    </reaction>
</comment>
<comment type="pathway">
    <text evidence="1">Amino-acid biosynthesis; L-methionine biosynthesis via salvage pathway; L-methionine from S-methyl-5-thio-alpha-D-ribose 1-phosphate: step 1/6.</text>
</comment>
<comment type="subcellular location">
    <subcellularLocation>
        <location evidence="1">Cytoplasm</location>
    </subcellularLocation>
    <subcellularLocation>
        <location evidence="1">Nucleus</location>
    </subcellularLocation>
</comment>
<comment type="similarity">
    <text evidence="1">Belongs to the eIF-2B alpha/beta/delta subunits family. MtnA subfamily.</text>
</comment>
<evidence type="ECO:0000255" key="1">
    <source>
        <dbReference type="HAMAP-Rule" id="MF_03119"/>
    </source>
</evidence>
<proteinExistence type="inferred from homology"/>
<name>MTNA_CHAGB</name>
<keyword id="KW-0028">Amino-acid biosynthesis</keyword>
<keyword id="KW-0963">Cytoplasm</keyword>
<keyword id="KW-0413">Isomerase</keyword>
<keyword id="KW-0486">Methionine biosynthesis</keyword>
<keyword id="KW-0539">Nucleus</keyword>
<keyword id="KW-1185">Reference proteome</keyword>
<gene>
    <name evidence="1" type="primary">MRI1</name>
    <name type="ORF">CHGG_10936</name>
</gene>
<organism>
    <name type="scientific">Chaetomium globosum (strain ATCC 6205 / CBS 148.51 / DSM 1962 / NBRC 6347 / NRRL 1970)</name>
    <name type="common">Soil fungus</name>
    <dbReference type="NCBI Taxonomy" id="306901"/>
    <lineage>
        <taxon>Eukaryota</taxon>
        <taxon>Fungi</taxon>
        <taxon>Dikarya</taxon>
        <taxon>Ascomycota</taxon>
        <taxon>Pezizomycotina</taxon>
        <taxon>Sordariomycetes</taxon>
        <taxon>Sordariomycetidae</taxon>
        <taxon>Sordariales</taxon>
        <taxon>Chaetomiaceae</taxon>
        <taxon>Chaetomium</taxon>
    </lineage>
</organism>
<protein>
    <recommendedName>
        <fullName evidence="1">Methylthioribose-1-phosphate isomerase</fullName>
        <shortName evidence="1">M1Pi</shortName>
        <shortName evidence="1">MTR-1-P isomerase</shortName>
        <ecNumber evidence="1">5.3.1.23</ecNumber>
    </recommendedName>
    <alternativeName>
        <fullName evidence="1">S-methyl-5-thioribose-1-phosphate isomerase</fullName>
    </alternativeName>
    <alternativeName>
        <fullName evidence="1">Translation initiation factor eIF-2B subunit alpha/beta/delta-like protein</fullName>
    </alternativeName>
</protein>
<feature type="chain" id="PRO_0000402023" description="Methylthioribose-1-phosphate isomerase">
    <location>
        <begin position="1"/>
        <end position="389"/>
    </location>
</feature>
<feature type="active site" description="Proton donor" evidence="1">
    <location>
        <position position="258"/>
    </location>
</feature>
<feature type="site" description="Transition state stabilizer" evidence="1">
    <location>
        <position position="174"/>
    </location>
</feature>
<reference key="1">
    <citation type="journal article" date="2015" name="Genome Announc.">
        <title>Draft genome sequence of the cellulolytic fungus Chaetomium globosum.</title>
        <authorList>
            <person name="Cuomo C.A."/>
            <person name="Untereiner W.A."/>
            <person name="Ma L.-J."/>
            <person name="Grabherr M."/>
            <person name="Birren B.W."/>
        </authorList>
    </citation>
    <scope>NUCLEOTIDE SEQUENCE [LARGE SCALE GENOMIC DNA]</scope>
    <source>
        <strain>ATCC 6205 / CBS 148.51 / DSM 1962 / NBRC 6347 / NRRL 1970</strain>
    </source>
</reference>
<sequence>MATLQAIKYSRGKLLVLDQLRLPHEHHYDEVSTAEQAFDCIRSMRVRGAPAIAIVAALAHAVELHNGDCTATTPEDTIAYIESRLDYLKDSRPTAVDLSNAIALLKQAARAATVEGLAHPEAKEAILNAYIAAAETILAKDLDNNTSIGTHGAAWLQQQYHATPSRPLSVLTHCNTGSLATSGHGTALGIIRSLHQQQLLKHAYCTETRPYNQGSRLTAFELVFEGIPATLVTDSMAAALFALHRERMNIGAVVVGADRVVRNGDTANKIGTYALAVLARHHGVKFVVAAPTTSIDLETESGAGIEIEERKPEELTQVTGAVVNADGSVDASRTARVAIADQRIGVWNPAFDVTPHDLIDAIVTERGAVVKGADGRFDFSQVLPERWRW</sequence>
<dbReference type="EC" id="5.3.1.23" evidence="1"/>
<dbReference type="EMBL" id="CH408036">
    <property type="protein sequence ID" value="EAQ83118.1"/>
    <property type="molecule type" value="Genomic_DNA"/>
</dbReference>
<dbReference type="RefSeq" id="XP_001226203.1">
    <property type="nucleotide sequence ID" value="XM_001226202.1"/>
</dbReference>
<dbReference type="SMR" id="Q2GM68"/>
<dbReference type="FunCoup" id="Q2GM68">
    <property type="interactions" value="655"/>
</dbReference>
<dbReference type="STRING" id="306901.Q2GM68"/>
<dbReference type="GeneID" id="4397162"/>
<dbReference type="VEuPathDB" id="FungiDB:CHGG_10936"/>
<dbReference type="eggNOG" id="KOG1468">
    <property type="taxonomic scope" value="Eukaryota"/>
</dbReference>
<dbReference type="HOGENOM" id="CLU_016218_1_3_1"/>
<dbReference type="InParanoid" id="Q2GM68"/>
<dbReference type="OMA" id="CETRPLN"/>
<dbReference type="OrthoDB" id="2461at2759"/>
<dbReference type="UniPathway" id="UPA00904">
    <property type="reaction ID" value="UER00874"/>
</dbReference>
<dbReference type="Proteomes" id="UP000001056">
    <property type="component" value="Unassembled WGS sequence"/>
</dbReference>
<dbReference type="GO" id="GO:0005737">
    <property type="term" value="C:cytoplasm"/>
    <property type="evidence" value="ECO:0007669"/>
    <property type="project" value="UniProtKB-SubCell"/>
</dbReference>
<dbReference type="GO" id="GO:0005634">
    <property type="term" value="C:nucleus"/>
    <property type="evidence" value="ECO:0007669"/>
    <property type="project" value="UniProtKB-SubCell"/>
</dbReference>
<dbReference type="GO" id="GO:0046523">
    <property type="term" value="F:S-methyl-5-thioribose-1-phosphate isomerase activity"/>
    <property type="evidence" value="ECO:0007669"/>
    <property type="project" value="UniProtKB-UniRule"/>
</dbReference>
<dbReference type="GO" id="GO:0019509">
    <property type="term" value="P:L-methionine salvage from methylthioadenosine"/>
    <property type="evidence" value="ECO:0007669"/>
    <property type="project" value="UniProtKB-UniRule"/>
</dbReference>
<dbReference type="FunFam" id="1.20.120.420:FF:000003">
    <property type="entry name" value="Methylthioribose-1-phosphate isomerase"/>
    <property type="match status" value="1"/>
</dbReference>
<dbReference type="FunFam" id="3.40.50.10470:FF:000003">
    <property type="entry name" value="Methylthioribose-1-phosphate isomerase"/>
    <property type="match status" value="1"/>
</dbReference>
<dbReference type="Gene3D" id="1.20.120.420">
    <property type="entry name" value="translation initiation factor eif-2b, domain 1"/>
    <property type="match status" value="1"/>
</dbReference>
<dbReference type="Gene3D" id="3.40.50.10470">
    <property type="entry name" value="Translation initiation factor eif-2b, domain 2"/>
    <property type="match status" value="1"/>
</dbReference>
<dbReference type="HAMAP" id="MF_01678">
    <property type="entry name" value="Salvage_MtnA"/>
    <property type="match status" value="1"/>
</dbReference>
<dbReference type="InterPro" id="IPR000649">
    <property type="entry name" value="IF-2B-related"/>
</dbReference>
<dbReference type="InterPro" id="IPR005251">
    <property type="entry name" value="IF-M1Pi"/>
</dbReference>
<dbReference type="InterPro" id="IPR042529">
    <property type="entry name" value="IF_2B-like_C"/>
</dbReference>
<dbReference type="InterPro" id="IPR011559">
    <property type="entry name" value="Initiation_fac_2B_a/b/d"/>
</dbReference>
<dbReference type="InterPro" id="IPR027363">
    <property type="entry name" value="M1Pi_N"/>
</dbReference>
<dbReference type="InterPro" id="IPR037171">
    <property type="entry name" value="NagB/RpiA_transferase-like"/>
</dbReference>
<dbReference type="NCBIfam" id="TIGR00524">
    <property type="entry name" value="eIF-2B_rel"/>
    <property type="match status" value="1"/>
</dbReference>
<dbReference type="NCBIfam" id="NF004326">
    <property type="entry name" value="PRK05720.1"/>
    <property type="match status" value="1"/>
</dbReference>
<dbReference type="NCBIfam" id="TIGR00512">
    <property type="entry name" value="salvage_mtnA"/>
    <property type="match status" value="1"/>
</dbReference>
<dbReference type="PANTHER" id="PTHR43475">
    <property type="entry name" value="METHYLTHIORIBOSE-1-PHOSPHATE ISOMERASE"/>
    <property type="match status" value="1"/>
</dbReference>
<dbReference type="PANTHER" id="PTHR43475:SF1">
    <property type="entry name" value="METHYLTHIORIBOSE-1-PHOSPHATE ISOMERASE"/>
    <property type="match status" value="1"/>
</dbReference>
<dbReference type="Pfam" id="PF01008">
    <property type="entry name" value="IF-2B"/>
    <property type="match status" value="1"/>
</dbReference>
<dbReference type="SUPFAM" id="SSF100950">
    <property type="entry name" value="NagB/RpiA/CoA transferase-like"/>
    <property type="match status" value="1"/>
</dbReference>
<accession>Q2GM68</accession>